<proteinExistence type="inferred from homology"/>
<dbReference type="EC" id="2.7.2.1" evidence="1"/>
<dbReference type="EMBL" id="CP000885">
    <property type="protein sequence ID" value="ABX41704.1"/>
    <property type="molecule type" value="Genomic_DNA"/>
</dbReference>
<dbReference type="RefSeq" id="WP_012199357.1">
    <property type="nucleotide sequence ID" value="NC_010001.1"/>
</dbReference>
<dbReference type="SMR" id="A9KNV3"/>
<dbReference type="STRING" id="357809.Cphy_1327"/>
<dbReference type="KEGG" id="cpy:Cphy_1327"/>
<dbReference type="eggNOG" id="COG0282">
    <property type="taxonomic scope" value="Bacteria"/>
</dbReference>
<dbReference type="HOGENOM" id="CLU_020352_0_1_9"/>
<dbReference type="OrthoDB" id="9802453at2"/>
<dbReference type="UniPathway" id="UPA00340">
    <property type="reaction ID" value="UER00458"/>
</dbReference>
<dbReference type="Proteomes" id="UP000000370">
    <property type="component" value="Chromosome"/>
</dbReference>
<dbReference type="GO" id="GO:0005737">
    <property type="term" value="C:cytoplasm"/>
    <property type="evidence" value="ECO:0007669"/>
    <property type="project" value="UniProtKB-SubCell"/>
</dbReference>
<dbReference type="GO" id="GO:0008776">
    <property type="term" value="F:acetate kinase activity"/>
    <property type="evidence" value="ECO:0007669"/>
    <property type="project" value="UniProtKB-UniRule"/>
</dbReference>
<dbReference type="GO" id="GO:0005524">
    <property type="term" value="F:ATP binding"/>
    <property type="evidence" value="ECO:0007669"/>
    <property type="project" value="UniProtKB-KW"/>
</dbReference>
<dbReference type="GO" id="GO:0000287">
    <property type="term" value="F:magnesium ion binding"/>
    <property type="evidence" value="ECO:0007669"/>
    <property type="project" value="UniProtKB-UniRule"/>
</dbReference>
<dbReference type="GO" id="GO:0006083">
    <property type="term" value="P:acetate metabolic process"/>
    <property type="evidence" value="ECO:0007669"/>
    <property type="project" value="TreeGrafter"/>
</dbReference>
<dbReference type="GO" id="GO:0006085">
    <property type="term" value="P:acetyl-CoA biosynthetic process"/>
    <property type="evidence" value="ECO:0007669"/>
    <property type="project" value="UniProtKB-UniRule"/>
</dbReference>
<dbReference type="CDD" id="cd24010">
    <property type="entry name" value="ASKHA_NBD_AcK_PK"/>
    <property type="match status" value="1"/>
</dbReference>
<dbReference type="Gene3D" id="3.30.420.40">
    <property type="match status" value="2"/>
</dbReference>
<dbReference type="HAMAP" id="MF_00020">
    <property type="entry name" value="Acetate_kinase"/>
    <property type="match status" value="1"/>
</dbReference>
<dbReference type="InterPro" id="IPR004372">
    <property type="entry name" value="Ac/propionate_kinase"/>
</dbReference>
<dbReference type="InterPro" id="IPR000890">
    <property type="entry name" value="Aliphatic_acid_kin_short-chain"/>
</dbReference>
<dbReference type="InterPro" id="IPR023865">
    <property type="entry name" value="Aliphatic_acid_kinase_CS"/>
</dbReference>
<dbReference type="InterPro" id="IPR043129">
    <property type="entry name" value="ATPase_NBD"/>
</dbReference>
<dbReference type="NCBIfam" id="TIGR00016">
    <property type="entry name" value="ackA"/>
    <property type="match status" value="1"/>
</dbReference>
<dbReference type="PANTHER" id="PTHR21060">
    <property type="entry name" value="ACETATE KINASE"/>
    <property type="match status" value="1"/>
</dbReference>
<dbReference type="PANTHER" id="PTHR21060:SF15">
    <property type="entry name" value="ACETATE KINASE-RELATED"/>
    <property type="match status" value="1"/>
</dbReference>
<dbReference type="Pfam" id="PF00871">
    <property type="entry name" value="Acetate_kinase"/>
    <property type="match status" value="1"/>
</dbReference>
<dbReference type="PIRSF" id="PIRSF000722">
    <property type="entry name" value="Acetate_prop_kin"/>
    <property type="match status" value="1"/>
</dbReference>
<dbReference type="PRINTS" id="PR00471">
    <property type="entry name" value="ACETATEKNASE"/>
</dbReference>
<dbReference type="SUPFAM" id="SSF53067">
    <property type="entry name" value="Actin-like ATPase domain"/>
    <property type="match status" value="2"/>
</dbReference>
<dbReference type="PROSITE" id="PS01075">
    <property type="entry name" value="ACETATE_KINASE_1"/>
    <property type="match status" value="1"/>
</dbReference>
<dbReference type="PROSITE" id="PS01076">
    <property type="entry name" value="ACETATE_KINASE_2"/>
    <property type="match status" value="1"/>
</dbReference>
<protein>
    <recommendedName>
        <fullName evidence="1">Acetate kinase</fullName>
        <ecNumber evidence="1">2.7.2.1</ecNumber>
    </recommendedName>
    <alternativeName>
        <fullName evidence="1">Acetokinase</fullName>
    </alternativeName>
</protein>
<evidence type="ECO:0000255" key="1">
    <source>
        <dbReference type="HAMAP-Rule" id="MF_00020"/>
    </source>
</evidence>
<organism>
    <name type="scientific">Lachnoclostridium phytofermentans (strain ATCC 700394 / DSM 18823 / ISDg)</name>
    <name type="common">Clostridium phytofermentans</name>
    <dbReference type="NCBI Taxonomy" id="357809"/>
    <lineage>
        <taxon>Bacteria</taxon>
        <taxon>Bacillati</taxon>
        <taxon>Bacillota</taxon>
        <taxon>Clostridia</taxon>
        <taxon>Lachnospirales</taxon>
        <taxon>Lachnospiraceae</taxon>
    </lineage>
</organism>
<accession>A9KNV3</accession>
<feature type="chain" id="PRO_1000074185" description="Acetate kinase">
    <location>
        <begin position="1"/>
        <end position="395"/>
    </location>
</feature>
<feature type="active site" description="Proton donor/acceptor" evidence="1">
    <location>
        <position position="147"/>
    </location>
</feature>
<feature type="binding site" evidence="1">
    <location>
        <position position="7"/>
    </location>
    <ligand>
        <name>Mg(2+)</name>
        <dbReference type="ChEBI" id="CHEBI:18420"/>
    </ligand>
</feature>
<feature type="binding site" evidence="1">
    <location>
        <position position="14"/>
    </location>
    <ligand>
        <name>ATP</name>
        <dbReference type="ChEBI" id="CHEBI:30616"/>
    </ligand>
</feature>
<feature type="binding site" evidence="1">
    <location>
        <position position="90"/>
    </location>
    <ligand>
        <name>substrate</name>
    </ligand>
</feature>
<feature type="binding site" evidence="1">
    <location>
        <begin position="207"/>
        <end position="211"/>
    </location>
    <ligand>
        <name>ATP</name>
        <dbReference type="ChEBI" id="CHEBI:30616"/>
    </ligand>
</feature>
<feature type="binding site" evidence="1">
    <location>
        <begin position="282"/>
        <end position="284"/>
    </location>
    <ligand>
        <name>ATP</name>
        <dbReference type="ChEBI" id="CHEBI:30616"/>
    </ligand>
</feature>
<feature type="binding site" evidence="1">
    <location>
        <begin position="330"/>
        <end position="334"/>
    </location>
    <ligand>
        <name>ATP</name>
        <dbReference type="ChEBI" id="CHEBI:30616"/>
    </ligand>
</feature>
<feature type="binding site" evidence="1">
    <location>
        <position position="383"/>
    </location>
    <ligand>
        <name>Mg(2+)</name>
        <dbReference type="ChEBI" id="CHEBI:18420"/>
    </ligand>
</feature>
<feature type="site" description="Transition state stabilizer" evidence="1">
    <location>
        <position position="179"/>
    </location>
</feature>
<feature type="site" description="Transition state stabilizer" evidence="1">
    <location>
        <position position="240"/>
    </location>
</feature>
<comment type="function">
    <text evidence="1">Catalyzes the formation of acetyl phosphate from acetate and ATP. Can also catalyze the reverse reaction.</text>
</comment>
<comment type="catalytic activity">
    <reaction evidence="1">
        <text>acetate + ATP = acetyl phosphate + ADP</text>
        <dbReference type="Rhea" id="RHEA:11352"/>
        <dbReference type="ChEBI" id="CHEBI:22191"/>
        <dbReference type="ChEBI" id="CHEBI:30089"/>
        <dbReference type="ChEBI" id="CHEBI:30616"/>
        <dbReference type="ChEBI" id="CHEBI:456216"/>
        <dbReference type="EC" id="2.7.2.1"/>
    </reaction>
</comment>
<comment type="cofactor">
    <cofactor evidence="1">
        <name>Mg(2+)</name>
        <dbReference type="ChEBI" id="CHEBI:18420"/>
    </cofactor>
    <cofactor evidence="1">
        <name>Mn(2+)</name>
        <dbReference type="ChEBI" id="CHEBI:29035"/>
    </cofactor>
    <text evidence="1">Mg(2+). Can also accept Mn(2+).</text>
</comment>
<comment type="pathway">
    <text evidence="1">Metabolic intermediate biosynthesis; acetyl-CoA biosynthesis; acetyl-CoA from acetate: step 1/2.</text>
</comment>
<comment type="subunit">
    <text evidence="1">Homodimer.</text>
</comment>
<comment type="subcellular location">
    <subcellularLocation>
        <location evidence="1">Cytoplasm</location>
    </subcellularLocation>
</comment>
<comment type="similarity">
    <text evidence="1">Belongs to the acetokinase family.</text>
</comment>
<sequence>MKVLVINCGSSSLKYQLIDSVTEQALAVGLCERIGIDGRLTHKSADGEKVVLEDALPNHEVAIKNVIAALMNENYGVIKSLDEINAVGHRVVHGGEKFAHSVVINDEVLNAIEECNDLAPLHNPANLIGINACKSIMPNVPMVAVFDTAFHQTMPKEAYLYGIPFEYYDKYKVRRYGFHGTSHSYVSKRATTLAGLDVNNSKVIVCHLGNGASISAVKNGESVDTSMGLTPLEGLIMGTRSGDLDPAIIDFVAKKENLSLDEVMNILNKKSGVLGMSGVSSDFRDIEAAANEGNEHAKEALAVFAYRVAKYVGSYIVAMNGVDAVVFTAGLGENDKNIRAAVSSHLEFLGVSLDAEKNSQRGKELIISNPDSKVKIMVIPTNEELAICREVVELV</sequence>
<reference key="1">
    <citation type="submission" date="2007-11" db="EMBL/GenBank/DDBJ databases">
        <title>Complete genome sequence of Clostridium phytofermentans ISDg.</title>
        <authorList>
            <person name="Leschine S.B."/>
            <person name="Warnick T.A."/>
            <person name="Blanchard J.L."/>
            <person name="Schnell D.J."/>
            <person name="Petit E.L."/>
            <person name="LaTouf W.G."/>
            <person name="Copeland A."/>
            <person name="Lucas S."/>
            <person name="Lapidus A."/>
            <person name="Barry K."/>
            <person name="Glavina del Rio T."/>
            <person name="Dalin E."/>
            <person name="Tice H."/>
            <person name="Pitluck S."/>
            <person name="Kiss H."/>
            <person name="Brettin T."/>
            <person name="Bruce D."/>
            <person name="Detter J.C."/>
            <person name="Han C."/>
            <person name="Kuske C."/>
            <person name="Schmutz J."/>
            <person name="Larimer F."/>
            <person name="Land M."/>
            <person name="Hauser L."/>
            <person name="Kyrpides N."/>
            <person name="Kim E.A."/>
            <person name="Richardson P."/>
        </authorList>
    </citation>
    <scope>NUCLEOTIDE SEQUENCE [LARGE SCALE GENOMIC DNA]</scope>
    <source>
        <strain>ATCC 700394 / DSM 18823 / ISDg</strain>
    </source>
</reference>
<keyword id="KW-0067">ATP-binding</keyword>
<keyword id="KW-0963">Cytoplasm</keyword>
<keyword id="KW-0418">Kinase</keyword>
<keyword id="KW-0460">Magnesium</keyword>
<keyword id="KW-0479">Metal-binding</keyword>
<keyword id="KW-0547">Nucleotide-binding</keyword>
<keyword id="KW-1185">Reference proteome</keyword>
<keyword id="KW-0808">Transferase</keyword>
<gene>
    <name evidence="1" type="primary">ackA</name>
    <name type="ordered locus">Cphy_1327</name>
</gene>
<name>ACKA_LACP7</name>